<evidence type="ECO:0000255" key="1">
    <source>
        <dbReference type="HAMAP-Rule" id="MF_01866"/>
    </source>
</evidence>
<feature type="chain" id="PRO_0000375418" description="YcgL domain-containing protein YpsIP31758_2009">
    <location>
        <begin position="1"/>
        <end position="90"/>
    </location>
</feature>
<feature type="domain" description="YcgL" evidence="1">
    <location>
        <begin position="1"/>
        <end position="85"/>
    </location>
</feature>
<accession>A7FIA4</accession>
<gene>
    <name type="ordered locus">YpsIP31758_2009</name>
</gene>
<protein>
    <recommendedName>
        <fullName evidence="1">YcgL domain-containing protein YpsIP31758_2009</fullName>
    </recommendedName>
</protein>
<reference key="1">
    <citation type="journal article" date="2007" name="PLoS Genet.">
        <title>The complete genome sequence of Yersinia pseudotuberculosis IP31758, the causative agent of Far East scarlet-like fever.</title>
        <authorList>
            <person name="Eppinger M."/>
            <person name="Rosovitz M.J."/>
            <person name="Fricke W.F."/>
            <person name="Rasko D.A."/>
            <person name="Kokorina G."/>
            <person name="Fayolle C."/>
            <person name="Lindler L.E."/>
            <person name="Carniel E."/>
            <person name="Ravel J."/>
        </authorList>
    </citation>
    <scope>NUCLEOTIDE SEQUENCE [LARGE SCALE GENOMIC DNA]</scope>
    <source>
        <strain>IP 31758</strain>
    </source>
</reference>
<dbReference type="EMBL" id="CP000720">
    <property type="protein sequence ID" value="ABS47487.1"/>
    <property type="molecule type" value="Genomic_DNA"/>
</dbReference>
<dbReference type="RefSeq" id="WP_002211743.1">
    <property type="nucleotide sequence ID" value="NC_009708.1"/>
</dbReference>
<dbReference type="SMR" id="A7FIA4"/>
<dbReference type="KEGG" id="ypi:YpsIP31758_2009"/>
<dbReference type="HOGENOM" id="CLU_155118_1_0_6"/>
<dbReference type="Proteomes" id="UP000002412">
    <property type="component" value="Chromosome"/>
</dbReference>
<dbReference type="Gene3D" id="3.10.510.20">
    <property type="entry name" value="YcgL domain"/>
    <property type="match status" value="1"/>
</dbReference>
<dbReference type="HAMAP" id="MF_01866">
    <property type="entry name" value="UPF0745"/>
    <property type="match status" value="1"/>
</dbReference>
<dbReference type="InterPro" id="IPR038068">
    <property type="entry name" value="YcgL-like_sf"/>
</dbReference>
<dbReference type="InterPro" id="IPR027354">
    <property type="entry name" value="YcgL_dom"/>
</dbReference>
<dbReference type="PANTHER" id="PTHR38109">
    <property type="entry name" value="PROTEIN YCGL"/>
    <property type="match status" value="1"/>
</dbReference>
<dbReference type="PANTHER" id="PTHR38109:SF1">
    <property type="entry name" value="PROTEIN YCGL"/>
    <property type="match status" value="1"/>
</dbReference>
<dbReference type="Pfam" id="PF05166">
    <property type="entry name" value="YcgL"/>
    <property type="match status" value="1"/>
</dbReference>
<dbReference type="SUPFAM" id="SSF160191">
    <property type="entry name" value="YcgL-like"/>
    <property type="match status" value="1"/>
</dbReference>
<dbReference type="PROSITE" id="PS51648">
    <property type="entry name" value="YCGL"/>
    <property type="match status" value="1"/>
</dbReference>
<proteinExistence type="inferred from homology"/>
<organism>
    <name type="scientific">Yersinia pseudotuberculosis serotype O:1b (strain IP 31758)</name>
    <dbReference type="NCBI Taxonomy" id="349747"/>
    <lineage>
        <taxon>Bacteria</taxon>
        <taxon>Pseudomonadati</taxon>
        <taxon>Pseudomonadota</taxon>
        <taxon>Gammaproteobacteria</taxon>
        <taxon>Enterobacterales</taxon>
        <taxon>Yersiniaceae</taxon>
        <taxon>Yersinia</taxon>
    </lineage>
</organism>
<sequence>MLCAIYRSPKRDQTYLYIEKKDDFSRVPAELLASFGKPQFAMLLALNERKTLATADVEKVKNALIEQGFYLQVPPPPESLLKMHLGETKA</sequence>
<name>Y2009_YERP3</name>